<feature type="chain" id="PRO_0000274773" description="Phosphonates import ATP-binding protein PhnC 1">
    <location>
        <begin position="1"/>
        <end position="233"/>
    </location>
</feature>
<feature type="domain" description="ABC transporter" evidence="1">
    <location>
        <begin position="2"/>
        <end position="227"/>
    </location>
</feature>
<feature type="binding site" evidence="1">
    <location>
        <begin position="34"/>
        <end position="41"/>
    </location>
    <ligand>
        <name>ATP</name>
        <dbReference type="ChEBI" id="CHEBI:30616"/>
    </ligand>
</feature>
<protein>
    <recommendedName>
        <fullName evidence="1">Phosphonates import ATP-binding protein PhnC 1</fullName>
        <ecNumber evidence="1">7.3.2.2</ecNumber>
    </recommendedName>
</protein>
<comment type="function">
    <text evidence="1">Part of the ABC transporter complex PhnCDE involved in phosphonates import. Responsible for energy coupling to the transport system.</text>
</comment>
<comment type="catalytic activity">
    <reaction evidence="1">
        <text>phosphonate(out) + ATP + H2O = phosphonate(in) + ADP + phosphate + H(+)</text>
        <dbReference type="Rhea" id="RHEA:18065"/>
        <dbReference type="ChEBI" id="CHEBI:15377"/>
        <dbReference type="ChEBI" id="CHEBI:15378"/>
        <dbReference type="ChEBI" id="CHEBI:16215"/>
        <dbReference type="ChEBI" id="CHEBI:30616"/>
        <dbReference type="ChEBI" id="CHEBI:43474"/>
        <dbReference type="ChEBI" id="CHEBI:456216"/>
        <dbReference type="EC" id="7.3.2.2"/>
    </reaction>
</comment>
<comment type="subunit">
    <text evidence="1">The complex is composed of two ATP-binding proteins (PhnC), two transmembrane proteins (PhnE) and a solute-binding protein (PhnD).</text>
</comment>
<comment type="subcellular location">
    <subcellularLocation>
        <location evidence="1">Cell membrane</location>
        <topology evidence="1">Peripheral membrane protein</topology>
    </subcellularLocation>
</comment>
<comment type="similarity">
    <text evidence="1">Belongs to the ABC transporter superfamily. Phosphonates importer (TC 3.A.1.9.1) family.</text>
</comment>
<name>PHNC1_NATPD</name>
<accession>Q3ISC1</accession>
<sequence length="233" mass="24796">MLSVSGLTKRYGDERALDDVSVDLQRGELTVLVGRSGAGKTTLLRCLDGLEQPDDGTIELDGRAPATTDVALVFQAGALVDSKSALSNVLDGALGRLPSWRELLGVYPADEKRAAIARLHDVGLGGYADRRVGTLSGGQRQRVGIARALQQEPAVLLADEPVASLDPETGRDVLERVAAVVRDDDLIGVVSLHQPRLAEPIADRYLGLADGRLVLDRPAAALDREDITAVYDD</sequence>
<organism>
    <name type="scientific">Natronomonas pharaonis (strain ATCC 35678 / DSM 2160 / CIP 103997 / JCM 8858 / NBRC 14720 / NCIMB 2260 / Gabara)</name>
    <name type="common">Halobacterium pharaonis</name>
    <dbReference type="NCBI Taxonomy" id="348780"/>
    <lineage>
        <taxon>Archaea</taxon>
        <taxon>Methanobacteriati</taxon>
        <taxon>Methanobacteriota</taxon>
        <taxon>Stenosarchaea group</taxon>
        <taxon>Halobacteria</taxon>
        <taxon>Halobacteriales</taxon>
        <taxon>Haloarculaceae</taxon>
        <taxon>Natronomonas</taxon>
    </lineage>
</organism>
<reference key="1">
    <citation type="journal article" date="2005" name="Genome Res.">
        <title>Living with two extremes: conclusions from the genome sequence of Natronomonas pharaonis.</title>
        <authorList>
            <person name="Falb M."/>
            <person name="Pfeiffer F."/>
            <person name="Palm P."/>
            <person name="Rodewald K."/>
            <person name="Hickmann V."/>
            <person name="Tittor J."/>
            <person name="Oesterhelt D."/>
        </authorList>
    </citation>
    <scope>NUCLEOTIDE SEQUENCE [LARGE SCALE GENOMIC DNA]</scope>
    <source>
        <strain>ATCC 35678 / DSM 2160 / CIP 103997 / JCM 8858 / NBRC 14720 / NCIMB 2260 / Gabara</strain>
    </source>
</reference>
<proteinExistence type="inferred from homology"/>
<keyword id="KW-0067">ATP-binding</keyword>
<keyword id="KW-1003">Cell membrane</keyword>
<keyword id="KW-0472">Membrane</keyword>
<keyword id="KW-0547">Nucleotide-binding</keyword>
<keyword id="KW-0918">Phosphonate transport</keyword>
<keyword id="KW-1185">Reference proteome</keyword>
<keyword id="KW-1278">Translocase</keyword>
<keyword id="KW-0813">Transport</keyword>
<evidence type="ECO:0000255" key="1">
    <source>
        <dbReference type="HAMAP-Rule" id="MF_01713"/>
    </source>
</evidence>
<gene>
    <name evidence="1" type="primary">phnC1</name>
    <name type="synonym">abc17a</name>
    <name type="ordered locus">NP_1750A</name>
</gene>
<dbReference type="EC" id="7.3.2.2" evidence="1"/>
<dbReference type="EMBL" id="CR936257">
    <property type="protein sequence ID" value="CAI48966.1"/>
    <property type="molecule type" value="Genomic_DNA"/>
</dbReference>
<dbReference type="RefSeq" id="WP_011322599.1">
    <property type="nucleotide sequence ID" value="NC_007426.1"/>
</dbReference>
<dbReference type="SMR" id="Q3ISC1"/>
<dbReference type="STRING" id="348780.NP_1750A"/>
<dbReference type="EnsemblBacteria" id="CAI48966">
    <property type="protein sequence ID" value="CAI48966"/>
    <property type="gene ID" value="NP_1750A"/>
</dbReference>
<dbReference type="GeneID" id="3702420"/>
<dbReference type="KEGG" id="nph:NP_1750A"/>
<dbReference type="eggNOG" id="arCOG00206">
    <property type="taxonomic scope" value="Archaea"/>
</dbReference>
<dbReference type="HOGENOM" id="CLU_000604_1_22_2"/>
<dbReference type="OrthoDB" id="302885at2157"/>
<dbReference type="Proteomes" id="UP000002698">
    <property type="component" value="Chromosome"/>
</dbReference>
<dbReference type="GO" id="GO:0005886">
    <property type="term" value="C:plasma membrane"/>
    <property type="evidence" value="ECO:0007669"/>
    <property type="project" value="UniProtKB-SubCell"/>
</dbReference>
<dbReference type="GO" id="GO:0015416">
    <property type="term" value="F:ABC-type phosphonate transporter activity"/>
    <property type="evidence" value="ECO:0007669"/>
    <property type="project" value="UniProtKB-EC"/>
</dbReference>
<dbReference type="GO" id="GO:0005524">
    <property type="term" value="F:ATP binding"/>
    <property type="evidence" value="ECO:0007669"/>
    <property type="project" value="UniProtKB-KW"/>
</dbReference>
<dbReference type="GO" id="GO:0016887">
    <property type="term" value="F:ATP hydrolysis activity"/>
    <property type="evidence" value="ECO:0007669"/>
    <property type="project" value="InterPro"/>
</dbReference>
<dbReference type="Gene3D" id="3.40.50.300">
    <property type="entry name" value="P-loop containing nucleotide triphosphate hydrolases"/>
    <property type="match status" value="1"/>
</dbReference>
<dbReference type="InterPro" id="IPR003593">
    <property type="entry name" value="AAA+_ATPase"/>
</dbReference>
<dbReference type="InterPro" id="IPR003439">
    <property type="entry name" value="ABC_transporter-like_ATP-bd"/>
</dbReference>
<dbReference type="InterPro" id="IPR017871">
    <property type="entry name" value="ABC_transporter-like_CS"/>
</dbReference>
<dbReference type="InterPro" id="IPR050086">
    <property type="entry name" value="MetN_ABC_transporter-like"/>
</dbReference>
<dbReference type="InterPro" id="IPR027417">
    <property type="entry name" value="P-loop_NTPase"/>
</dbReference>
<dbReference type="PANTHER" id="PTHR43166">
    <property type="entry name" value="AMINO ACID IMPORT ATP-BINDING PROTEIN"/>
    <property type="match status" value="1"/>
</dbReference>
<dbReference type="PANTHER" id="PTHR43166:SF6">
    <property type="entry name" value="PHOSPHONATES IMPORT ATP-BINDING PROTEIN PHNC"/>
    <property type="match status" value="1"/>
</dbReference>
<dbReference type="Pfam" id="PF00005">
    <property type="entry name" value="ABC_tran"/>
    <property type="match status" value="1"/>
</dbReference>
<dbReference type="SMART" id="SM00382">
    <property type="entry name" value="AAA"/>
    <property type="match status" value="1"/>
</dbReference>
<dbReference type="SUPFAM" id="SSF52540">
    <property type="entry name" value="P-loop containing nucleoside triphosphate hydrolases"/>
    <property type="match status" value="1"/>
</dbReference>
<dbReference type="PROSITE" id="PS00211">
    <property type="entry name" value="ABC_TRANSPORTER_1"/>
    <property type="match status" value="1"/>
</dbReference>
<dbReference type="PROSITE" id="PS50893">
    <property type="entry name" value="ABC_TRANSPORTER_2"/>
    <property type="match status" value="1"/>
</dbReference>
<dbReference type="PROSITE" id="PS51249">
    <property type="entry name" value="PHNC"/>
    <property type="match status" value="1"/>
</dbReference>